<reference key="1">
    <citation type="journal article" date="1997" name="Eur. J. Biochem.">
        <title>Heterodisulfide reductase from methanol-grown cells of Methanosarcina barkeri is not a flavoenzyme.</title>
        <authorList>
            <person name="Kuenkel A."/>
            <person name="Vaupel M."/>
            <person name="Heim S."/>
            <person name="Thauer R.K."/>
            <person name="Hedderich R."/>
        </authorList>
    </citation>
    <scope>NUCLEOTIDE SEQUENCE [GENOMIC DNA]</scope>
    <scope>PROTEIN SEQUENCE OF 1-24</scope>
    <scope>FUNCTION</scope>
    <scope>SUBUNIT</scope>
    <source>
        <strain>Fusaro / DSM 804</strain>
    </source>
</reference>
<reference key="2">
    <citation type="journal article" date="2006" name="J. Bacteriol.">
        <title>The Methanosarcina barkeri genome: comparative analysis with Methanosarcina acetivorans and Methanosarcina mazei reveals extensive rearrangement within methanosarcinal genomes.</title>
        <authorList>
            <person name="Maeder D.L."/>
            <person name="Anderson I."/>
            <person name="Brettin T.S."/>
            <person name="Bruce D.C."/>
            <person name="Gilna P."/>
            <person name="Han C.S."/>
            <person name="Lapidus A."/>
            <person name="Metcalf W.W."/>
            <person name="Saunders E."/>
            <person name="Tapia R."/>
            <person name="Sowers K.R."/>
        </authorList>
    </citation>
    <scope>NUCLEOTIDE SEQUENCE [LARGE SCALE GENOMIC DNA]</scope>
    <source>
        <strain>Fusaro / DSM 804</strain>
    </source>
</reference>
<reference key="3">
    <citation type="journal article" date="1994" name="Eur. J. Biochem.">
        <title>Purification of a two-subunit cytochrome-b-containing heterodisulfide reductase from methanol-grown Methanosarcina barkeri.</title>
        <authorList>
            <person name="Heiden S."/>
            <person name="Hedderich R."/>
            <person name="Setzke E."/>
            <person name="Thauer R.K."/>
        </authorList>
    </citation>
    <scope>PROTEIN SEQUENCE OF 1-24</scope>
    <scope>FUNCTION</scope>
    <scope>SUBUNIT</scope>
</reference>
<evidence type="ECO:0000250" key="1">
    <source>
        <dbReference type="UniProtKB" id="A0A0E3NFS5"/>
    </source>
</evidence>
<evidence type="ECO:0000255" key="2"/>
<evidence type="ECO:0000269" key="3">
    <source>
    </source>
</evidence>
<evidence type="ECO:0000269" key="4">
    <source>
    </source>
</evidence>
<evidence type="ECO:0000305" key="5"/>
<evidence type="ECO:0000305" key="6">
    <source>
    </source>
</evidence>
<evidence type="ECO:0000305" key="7">
    <source>
    </source>
</evidence>
<gene>
    <name type="primary">hdrE</name>
    <name type="ordered locus">Mbar_A1598</name>
</gene>
<proteinExistence type="evidence at protein level"/>
<comment type="function">
    <text evidence="6 7">Part of a complex that catalyzes the reversible reduction of CoM-S-S-CoB to the thiol-coenzymes H-S-CoM (coenzyme M) and H-S-CoB (coenzyme B). HdrE may be responsible for anchoring the complex to the membrane.</text>
</comment>
<comment type="catalytic activity">
    <reaction evidence="1">
        <text>methanophenazine + coenzyme B + coenzyme M = dihydromethanophenazine + coenzyme M-coenzyme B heterodisulfide</text>
        <dbReference type="Rhea" id="RHEA:18085"/>
        <dbReference type="ChEBI" id="CHEBI:29118"/>
        <dbReference type="ChEBI" id="CHEBI:50375"/>
        <dbReference type="ChEBI" id="CHEBI:58319"/>
        <dbReference type="ChEBI" id="CHEBI:58411"/>
        <dbReference type="ChEBI" id="CHEBI:58596"/>
        <dbReference type="EC" id="1.8.98.1"/>
    </reaction>
</comment>
<comment type="cofactor">
    <cofactor evidence="1">
        <name>heme b</name>
        <dbReference type="ChEBI" id="CHEBI:60344"/>
    </cofactor>
    <text evidence="1">Binds 2 heme b (iron(II)-protoporphyrin IX) groups per subunit.</text>
</comment>
<comment type="pathway">
    <text evidence="5">Cofactor metabolism; coenzyme M-coenzyme B heterodisulfide reduction; coenzyme B and coenzyme M from coenzyme M-coenzyme B heterodisulfide: step 1/1.</text>
</comment>
<comment type="subunit">
    <text evidence="3 4">The dihydromethanophenazine:CoB--CoM heterodisulfide reductase is composed of two subunits; HdrD and HdrE.</text>
</comment>
<comment type="subcellular location">
    <subcellularLocation>
        <location evidence="5">Cell membrane</location>
        <topology evidence="2">Multi-pass membrane protein</topology>
    </subcellularLocation>
</comment>
<comment type="similarity">
    <text evidence="5">Belongs to the HdrE family.</text>
</comment>
<comment type="sequence caution" evidence="5">
    <conflict type="erroneous initiation">
        <sequence resource="EMBL-CDS" id="AAZ70544"/>
    </conflict>
</comment>
<accession>P96796</accession>
<accession>Q46C48</accession>
<accession>Q9UWK1</accession>
<name>HDRE_METBF</name>
<dbReference type="EC" id="1.8.98.1" evidence="1"/>
<dbReference type="EMBL" id="Y09870">
    <property type="protein sequence ID" value="CAA70996.1"/>
    <property type="molecule type" value="Genomic_DNA"/>
</dbReference>
<dbReference type="EMBL" id="CP000099">
    <property type="protein sequence ID" value="AAZ70544.1"/>
    <property type="status" value="ALT_INIT"/>
    <property type="molecule type" value="Genomic_DNA"/>
</dbReference>
<dbReference type="PIR" id="S43469">
    <property type="entry name" value="S43469"/>
</dbReference>
<dbReference type="STRING" id="269797.Mbar_A1598"/>
<dbReference type="TCDB" id="3.D.7.1.1">
    <property type="family name" value="the h2:heterodisulfide oxidoreductase (hho) family"/>
</dbReference>
<dbReference type="PaxDb" id="269797-Mbar_A1598"/>
<dbReference type="KEGG" id="mba:Mbar_A1598"/>
<dbReference type="eggNOG" id="arCOG05014">
    <property type="taxonomic scope" value="Archaea"/>
</dbReference>
<dbReference type="HOGENOM" id="CLU_1072042_0_0_2"/>
<dbReference type="BioCyc" id="MetaCyc:HDREMBARK-MONOMER"/>
<dbReference type="BRENDA" id="1.8.98.1">
    <property type="organism ID" value="3250"/>
</dbReference>
<dbReference type="UniPathway" id="UPA00647">
    <property type="reaction ID" value="UER00700"/>
</dbReference>
<dbReference type="GO" id="GO:0016020">
    <property type="term" value="C:membrane"/>
    <property type="evidence" value="ECO:0000303"/>
    <property type="project" value="UniProtKB"/>
</dbReference>
<dbReference type="GO" id="GO:0005886">
    <property type="term" value="C:plasma membrane"/>
    <property type="evidence" value="ECO:0007669"/>
    <property type="project" value="UniProtKB-SubCell"/>
</dbReference>
<dbReference type="GO" id="GO:0051912">
    <property type="term" value="F:CoB--CoM heterodisulfide reductase activity"/>
    <property type="evidence" value="ECO:0000314"/>
    <property type="project" value="UniProtKB"/>
</dbReference>
<dbReference type="GO" id="GO:0046872">
    <property type="term" value="F:metal ion binding"/>
    <property type="evidence" value="ECO:0007669"/>
    <property type="project" value="UniProtKB-KW"/>
</dbReference>
<dbReference type="GO" id="GO:0015948">
    <property type="term" value="P:methanogenesis"/>
    <property type="evidence" value="ECO:0000314"/>
    <property type="project" value="UniProtKB"/>
</dbReference>
<dbReference type="Gene3D" id="1.20.950.20">
    <property type="entry name" value="Transmembrane di-heme cytochromes, Chain C"/>
    <property type="match status" value="1"/>
</dbReference>
<dbReference type="InterPro" id="IPR023234">
    <property type="entry name" value="NarG-like_domain"/>
</dbReference>
<dbReference type="InterPro" id="IPR036197">
    <property type="entry name" value="NarG-like_sf"/>
</dbReference>
<dbReference type="Pfam" id="PF02665">
    <property type="entry name" value="Nitrate_red_gam"/>
    <property type="match status" value="1"/>
</dbReference>
<dbReference type="SUPFAM" id="SSF103501">
    <property type="entry name" value="Respiratory nitrate reductase 1 gamma chain"/>
    <property type="match status" value="1"/>
</dbReference>
<sequence length="263" mass="29734">MSEEMLYFSGLSDVLRMTFVQIMIFSTIAIVIFLYGLISNFQKWGTGVTGYALEPQEGKKGSAITFLKTWWSQVTAESHHRGESILEILILDILFQRRILKRSPFRWVMHLFIFGGWMTLFALSGMMFAVEMTEKIGIALPFTPAEFRDFLSIPNYIFGYILLIGVLVALVRRLFVSEVREASIMYDWVLIGIVFLVTISGFIADGIRTGFIWSFGLDPSVAPPAALFHSIFSLLFCIAFIPYSKYIHIIAIPLALLANKGGE</sequence>
<keyword id="KW-1003">Cell membrane</keyword>
<keyword id="KW-0903">Direct protein sequencing</keyword>
<keyword id="KW-0349">Heme</keyword>
<keyword id="KW-0408">Iron</keyword>
<keyword id="KW-0472">Membrane</keyword>
<keyword id="KW-0479">Metal-binding</keyword>
<keyword id="KW-0484">Methanogenesis</keyword>
<keyword id="KW-0560">Oxidoreductase</keyword>
<keyword id="KW-0812">Transmembrane</keyword>
<keyword id="KW-1133">Transmembrane helix</keyword>
<feature type="chain" id="PRO_0000150083" description="Dihydromethanophenazine:CoB--CoM heterodisulfide reductase subunit E">
    <location>
        <begin position="1"/>
        <end position="263"/>
    </location>
</feature>
<feature type="transmembrane region" description="Helical" evidence="2">
    <location>
        <begin position="18"/>
        <end position="38"/>
    </location>
</feature>
<feature type="transmembrane region" description="Helical" evidence="2">
    <location>
        <begin position="108"/>
        <end position="128"/>
    </location>
</feature>
<feature type="transmembrane region" description="Helical" evidence="2">
    <location>
        <begin position="150"/>
        <end position="170"/>
    </location>
</feature>
<feature type="transmembrane region" description="Helical" evidence="2">
    <location>
        <begin position="184"/>
        <end position="204"/>
    </location>
</feature>
<feature type="transmembrane region" description="Helical" evidence="2">
    <location>
        <begin position="221"/>
        <end position="241"/>
    </location>
</feature>
<feature type="sequence conflict" description="In Ref. 3; AA sequence." evidence="5" ref="3">
    <original>MS</original>
    <variation>K</variation>
    <location>
        <begin position="1"/>
        <end position="2"/>
    </location>
</feature>
<organism>
    <name type="scientific">Methanosarcina barkeri (strain Fusaro / DSM 804)</name>
    <dbReference type="NCBI Taxonomy" id="269797"/>
    <lineage>
        <taxon>Archaea</taxon>
        <taxon>Methanobacteriati</taxon>
        <taxon>Methanobacteriota</taxon>
        <taxon>Stenosarchaea group</taxon>
        <taxon>Methanomicrobia</taxon>
        <taxon>Methanosarcinales</taxon>
        <taxon>Methanosarcinaceae</taxon>
        <taxon>Methanosarcina</taxon>
    </lineage>
</organism>
<protein>
    <recommendedName>
        <fullName evidence="5">Dihydromethanophenazine:CoB--CoM heterodisulfide reductase subunit E</fullName>
        <ecNumber evidence="1">1.8.98.1</ecNumber>
    </recommendedName>
    <alternativeName>
        <fullName evidence="5">CoB--CoM heterodisulfide reductase subunit E</fullName>
    </alternativeName>
    <alternativeName>
        <fullName evidence="5">Coenzyme B:coenzyme M:methanophenazine oxidoreductase subunit E</fullName>
    </alternativeName>
</protein>